<feature type="chain" id="PRO_1000201188" description="3-hydroxydecanoyl-[acyl-carrier-protein] dehydratase">
    <location>
        <begin position="1"/>
        <end position="172"/>
    </location>
</feature>
<feature type="active site" evidence="1">
    <location>
        <position position="71"/>
    </location>
</feature>
<reference key="1">
    <citation type="journal article" date="2009" name="PLoS Genet.">
        <title>Organised genome dynamics in the Escherichia coli species results in highly diverse adaptive paths.</title>
        <authorList>
            <person name="Touchon M."/>
            <person name="Hoede C."/>
            <person name="Tenaillon O."/>
            <person name="Barbe V."/>
            <person name="Baeriswyl S."/>
            <person name="Bidet P."/>
            <person name="Bingen E."/>
            <person name="Bonacorsi S."/>
            <person name="Bouchier C."/>
            <person name="Bouvet O."/>
            <person name="Calteau A."/>
            <person name="Chiapello H."/>
            <person name="Clermont O."/>
            <person name="Cruveiller S."/>
            <person name="Danchin A."/>
            <person name="Diard M."/>
            <person name="Dossat C."/>
            <person name="Karoui M.E."/>
            <person name="Frapy E."/>
            <person name="Garry L."/>
            <person name="Ghigo J.M."/>
            <person name="Gilles A.M."/>
            <person name="Johnson J."/>
            <person name="Le Bouguenec C."/>
            <person name="Lescat M."/>
            <person name="Mangenot S."/>
            <person name="Martinez-Jehanne V."/>
            <person name="Matic I."/>
            <person name="Nassif X."/>
            <person name="Oztas S."/>
            <person name="Petit M.A."/>
            <person name="Pichon C."/>
            <person name="Rouy Z."/>
            <person name="Ruf C.S."/>
            <person name="Schneider D."/>
            <person name="Tourret J."/>
            <person name="Vacherie B."/>
            <person name="Vallenet D."/>
            <person name="Medigue C."/>
            <person name="Rocha E.P.C."/>
            <person name="Denamur E."/>
        </authorList>
    </citation>
    <scope>NUCLEOTIDE SEQUENCE [LARGE SCALE GENOMIC DNA]</scope>
    <source>
        <strain>ATCC 35469 / DSM 13698 / BCRC 15582 / CCUG 18766 / IAM 14443 / JCM 21226 / LMG 7866 / NBRC 102419 / NCTC 12128 / CDC 0568-73</strain>
    </source>
</reference>
<accession>B7LNW4</accession>
<dbReference type="EC" id="4.2.1.59" evidence="1"/>
<dbReference type="EC" id="5.3.3.14" evidence="1"/>
<dbReference type="EMBL" id="CU928158">
    <property type="protein sequence ID" value="CAQ88620.1"/>
    <property type="molecule type" value="Genomic_DNA"/>
</dbReference>
<dbReference type="RefSeq" id="WP_000227930.1">
    <property type="nucleotide sequence ID" value="NC_011740.1"/>
</dbReference>
<dbReference type="SMR" id="B7LNW4"/>
<dbReference type="GeneID" id="75057858"/>
<dbReference type="KEGG" id="efe:EFER_1091"/>
<dbReference type="HOGENOM" id="CLU_097925_0_0_6"/>
<dbReference type="OrthoDB" id="9786735at2"/>
<dbReference type="UniPathway" id="UPA00094"/>
<dbReference type="Proteomes" id="UP000000745">
    <property type="component" value="Chromosome"/>
</dbReference>
<dbReference type="GO" id="GO:0005737">
    <property type="term" value="C:cytoplasm"/>
    <property type="evidence" value="ECO:0007669"/>
    <property type="project" value="UniProtKB-SubCell"/>
</dbReference>
<dbReference type="GO" id="GO:0019171">
    <property type="term" value="F:(3R)-hydroxyacyl-[acyl-carrier-protein] dehydratase activity"/>
    <property type="evidence" value="ECO:0007669"/>
    <property type="project" value="UniProtKB-UniRule"/>
</dbReference>
<dbReference type="GO" id="GO:0034017">
    <property type="term" value="F:trans-2-decenoyl-acyl-carrier-protein isomerase activity"/>
    <property type="evidence" value="ECO:0007669"/>
    <property type="project" value="UniProtKB-UniRule"/>
</dbReference>
<dbReference type="GO" id="GO:0006636">
    <property type="term" value="P:unsaturated fatty acid biosynthetic process"/>
    <property type="evidence" value="ECO:0007669"/>
    <property type="project" value="UniProtKB-UniRule"/>
</dbReference>
<dbReference type="CDD" id="cd01287">
    <property type="entry name" value="FabA"/>
    <property type="match status" value="1"/>
</dbReference>
<dbReference type="FunFam" id="3.10.129.10:FF:000003">
    <property type="entry name" value="3-hydroxydecanoyl-[acyl-carrier-protein] dehydratase"/>
    <property type="match status" value="1"/>
</dbReference>
<dbReference type="Gene3D" id="3.10.129.10">
    <property type="entry name" value="Hotdog Thioesterase"/>
    <property type="match status" value="1"/>
</dbReference>
<dbReference type="HAMAP" id="MF_00405">
    <property type="entry name" value="FabA"/>
    <property type="match status" value="1"/>
</dbReference>
<dbReference type="InterPro" id="IPR010083">
    <property type="entry name" value="FabA"/>
</dbReference>
<dbReference type="InterPro" id="IPR013114">
    <property type="entry name" value="FabA_FabZ"/>
</dbReference>
<dbReference type="InterPro" id="IPR029069">
    <property type="entry name" value="HotDog_dom_sf"/>
</dbReference>
<dbReference type="NCBIfam" id="TIGR01749">
    <property type="entry name" value="fabA"/>
    <property type="match status" value="1"/>
</dbReference>
<dbReference type="NCBIfam" id="NF003509">
    <property type="entry name" value="PRK05174.1"/>
    <property type="match status" value="1"/>
</dbReference>
<dbReference type="PANTHER" id="PTHR30272">
    <property type="entry name" value="3-HYDROXYACYL-[ACYL-CARRIER-PROTEIN] DEHYDRATASE"/>
    <property type="match status" value="1"/>
</dbReference>
<dbReference type="PANTHER" id="PTHR30272:SF8">
    <property type="entry name" value="3-HYDROXYDECANOYL-[ACYL-CARRIER-PROTEIN] DEHYDRATASE"/>
    <property type="match status" value="1"/>
</dbReference>
<dbReference type="Pfam" id="PF07977">
    <property type="entry name" value="FabA"/>
    <property type="match status" value="1"/>
</dbReference>
<dbReference type="SUPFAM" id="SSF54637">
    <property type="entry name" value="Thioesterase/thiol ester dehydrase-isomerase"/>
    <property type="match status" value="1"/>
</dbReference>
<protein>
    <recommendedName>
        <fullName evidence="1">3-hydroxydecanoyl-[acyl-carrier-protein] dehydratase</fullName>
        <ecNumber evidence="1">4.2.1.59</ecNumber>
    </recommendedName>
    <alternativeName>
        <fullName evidence="1">3-hydroxyacyl-[acyl-carrier-protein] dehydratase FabA</fullName>
    </alternativeName>
    <alternativeName>
        <fullName evidence="1">Beta-hydroxydecanoyl thioester dehydrase</fullName>
    </alternativeName>
    <alternativeName>
        <fullName evidence="1">Trans-2-decenoyl-[acyl-carrier-protein] isomerase</fullName>
        <ecNumber evidence="1">5.3.3.14</ecNumber>
    </alternativeName>
</protein>
<evidence type="ECO:0000255" key="1">
    <source>
        <dbReference type="HAMAP-Rule" id="MF_00405"/>
    </source>
</evidence>
<sequence>MVDKRESYTKEDLLASGRGELFGAKGPQLPAPNMLMMDRVVKMTETGGNYDKGYVEAELDINPDLWFFGCHFIGDPVMPGCLGLDAMWQLVGFYLGWLGGEGKGRALGVGEVKFTGQVLPTAKKVTYRIHFKRIVNRRLIMGLADGEVLVDGRLIYTASDLKVGLFQDTSSF</sequence>
<name>FABA_ESCF3</name>
<keyword id="KW-0963">Cytoplasm</keyword>
<keyword id="KW-0275">Fatty acid biosynthesis</keyword>
<keyword id="KW-0276">Fatty acid metabolism</keyword>
<keyword id="KW-0413">Isomerase</keyword>
<keyword id="KW-0444">Lipid biosynthesis</keyword>
<keyword id="KW-0443">Lipid metabolism</keyword>
<keyword id="KW-0456">Lyase</keyword>
<comment type="function">
    <text evidence="1">Necessary for the introduction of cis unsaturation into fatty acids. Catalyzes the dehydration of (3R)-3-hydroxydecanoyl-ACP to E-(2)-decenoyl-ACP and then its isomerization to Z-(3)-decenoyl-ACP. Can catalyze the dehydratase reaction for beta-hydroxyacyl-ACPs with saturated chain lengths up to 16:0, being most active on intermediate chain length.</text>
</comment>
<comment type="catalytic activity">
    <reaction evidence="1">
        <text>a (3R)-hydroxyacyl-[ACP] = a (2E)-enoyl-[ACP] + H2O</text>
        <dbReference type="Rhea" id="RHEA:13097"/>
        <dbReference type="Rhea" id="RHEA-COMP:9925"/>
        <dbReference type="Rhea" id="RHEA-COMP:9945"/>
        <dbReference type="ChEBI" id="CHEBI:15377"/>
        <dbReference type="ChEBI" id="CHEBI:78784"/>
        <dbReference type="ChEBI" id="CHEBI:78827"/>
        <dbReference type="EC" id="4.2.1.59"/>
    </reaction>
</comment>
<comment type="catalytic activity">
    <reaction evidence="1">
        <text>(3R)-hydroxydecanoyl-[ACP] = (2E)-decenoyl-[ACP] + H2O</text>
        <dbReference type="Rhea" id="RHEA:41860"/>
        <dbReference type="Rhea" id="RHEA-COMP:9638"/>
        <dbReference type="Rhea" id="RHEA-COMP:9639"/>
        <dbReference type="ChEBI" id="CHEBI:15377"/>
        <dbReference type="ChEBI" id="CHEBI:78466"/>
        <dbReference type="ChEBI" id="CHEBI:78467"/>
    </reaction>
</comment>
<comment type="catalytic activity">
    <reaction evidence="1">
        <text>(2E)-decenoyl-[ACP] = (3Z)-decenoyl-[ACP]</text>
        <dbReference type="Rhea" id="RHEA:23568"/>
        <dbReference type="Rhea" id="RHEA-COMP:9639"/>
        <dbReference type="Rhea" id="RHEA-COMP:9927"/>
        <dbReference type="ChEBI" id="CHEBI:78467"/>
        <dbReference type="ChEBI" id="CHEBI:78798"/>
        <dbReference type="EC" id="5.3.3.14"/>
    </reaction>
</comment>
<comment type="pathway">
    <text evidence="1">Lipid metabolism; fatty acid biosynthesis.</text>
</comment>
<comment type="subunit">
    <text evidence="1">Homodimer.</text>
</comment>
<comment type="subcellular location">
    <subcellularLocation>
        <location evidence="1">Cytoplasm</location>
    </subcellularLocation>
</comment>
<comment type="similarity">
    <text evidence="1">Belongs to the thioester dehydratase family. FabA subfamily.</text>
</comment>
<organism>
    <name type="scientific">Escherichia fergusonii (strain ATCC 35469 / DSM 13698 / CCUG 18766 / IAM 14443 / JCM 21226 / LMG 7866 / NBRC 102419 / NCTC 12128 / CDC 0568-73)</name>
    <dbReference type="NCBI Taxonomy" id="585054"/>
    <lineage>
        <taxon>Bacteria</taxon>
        <taxon>Pseudomonadati</taxon>
        <taxon>Pseudomonadota</taxon>
        <taxon>Gammaproteobacteria</taxon>
        <taxon>Enterobacterales</taxon>
        <taxon>Enterobacteriaceae</taxon>
        <taxon>Escherichia</taxon>
    </lineage>
</organism>
<proteinExistence type="inferred from homology"/>
<gene>
    <name evidence="1" type="primary">fabA</name>
    <name type="ordered locus">EFER_1091</name>
</gene>